<feature type="chain" id="PRO_0000053237" description="Hemoglobin subunit gamma">
    <location>
        <begin position="1"/>
        <end position="147"/>
    </location>
</feature>
<feature type="domain" description="Globin" evidence="1">
    <location>
        <begin position="3"/>
        <end position="147"/>
    </location>
</feature>
<feature type="binding site" description="distal binding residue" evidence="1">
    <location>
        <position position="64"/>
    </location>
    <ligand>
        <name>heme b</name>
        <dbReference type="ChEBI" id="CHEBI:60344"/>
    </ligand>
    <ligandPart>
        <name>Fe</name>
        <dbReference type="ChEBI" id="CHEBI:18248"/>
    </ligandPart>
</feature>
<feature type="binding site" description="proximal binding residue" evidence="1">
    <location>
        <position position="93"/>
    </location>
    <ligand>
        <name>heme b</name>
        <dbReference type="ChEBI" id="CHEBI:60344"/>
    </ligand>
    <ligandPart>
        <name>Fe</name>
        <dbReference type="ChEBI" id="CHEBI:18248"/>
    </ligandPart>
</feature>
<keyword id="KW-0349">Heme</keyword>
<keyword id="KW-0408">Iron</keyword>
<keyword id="KW-0479">Metal-binding</keyword>
<keyword id="KW-0561">Oxygen transport</keyword>
<keyword id="KW-0813">Transport</keyword>
<reference key="1">
    <citation type="journal article" date="1985" name="Proc. Natl. Acad. Sci. U.S.A.">
        <title>Nucleotide sequence, evolution, and expression of the fetal globin gene of the spider monkey Ateles geoffroyi.</title>
        <authorList>
            <person name="Giebel L.B."/>
            <person name="van Santen V.L."/>
            <person name="Slightom J.L."/>
            <person name="Spritz R.A."/>
        </authorList>
    </citation>
    <scope>NUCLEOTIDE SEQUENCE [GENOMIC DNA]</scope>
</reference>
<reference key="2">
    <citation type="journal article" date="1991" name="Proc. Natl. Acad. Sci. U.S.A.">
        <title>Duplication of the gamma-globin gene mediated by L1 long interspersed repetitive elements in an early ancestor of simian primates.</title>
        <authorList>
            <person name="Fitch D.H."/>
            <person name="Bailey W.J."/>
            <person name="Tagle D.A."/>
            <person name="Goodman M."/>
            <person name="Sieu L."/>
            <person name="Slightom J.L."/>
        </authorList>
    </citation>
    <scope>NUCLEOTIDE SEQUENCE [GENOMIC DNA]</scope>
</reference>
<reference key="3">
    <citation type="journal article" date="1999" name="Mol. Phylogenet. Evol.">
        <title>Molecular phylogeny of ateline new world monkeys (Platyrrhini, atelinae) based on gamma-globin gene sequences: evidence that Brachyteles is the sister group of Lagothrix.</title>
        <authorList>
            <person name="Meireles C.M."/>
            <person name="Czelusniak J."/>
            <person name="Schneider M.P.C."/>
            <person name="Muniz J.A.P.C."/>
            <person name="Brigido M.C."/>
            <person name="Ferreira H.S."/>
            <person name="Goodman M."/>
        </authorList>
    </citation>
    <scope>NUCLEOTIDE SEQUENCE [GENOMIC DNA]</scope>
</reference>
<protein>
    <recommendedName>
        <fullName>Hemoglobin subunit gamma</fullName>
    </recommendedName>
    <alternativeName>
        <fullName>Gamma-globin</fullName>
    </alternativeName>
    <alternativeName>
        <fullName>Hemoglobin gamma chain</fullName>
    </alternativeName>
</protein>
<comment type="function">
    <text>Gamma chains make up the fetal hemoglobin F, in combination with alpha chains.</text>
</comment>
<comment type="subunit">
    <text>Heterotetramer of two alpha chains and two gamma chains in fetal hemoglobin (Hb F).</text>
</comment>
<comment type="tissue specificity">
    <text>Red blood cells.</text>
</comment>
<comment type="similarity">
    <text evidence="1">Belongs to the globin family.</text>
</comment>
<gene>
    <name type="primary">HBG</name>
</gene>
<sequence length="147" mass="15940">MSNFTAEDKAAITSLWGKVNVEDAGGETLGRLLVVYPWTQRFFDSFGSLSSPSAIMGNPKVKAHGVKVLTSLGEAIKNLDDLKGTFGQLSELHCDKLHVDPENFRLLGNVLVTVLAILHGKEFTPEVQASWQKMVAGVASALASRYH</sequence>
<organism>
    <name type="scientific">Ateles geoffroyi</name>
    <name type="common">Black-handed spider monkey</name>
    <name type="synonym">Geoffroy's spider monkey</name>
    <dbReference type="NCBI Taxonomy" id="9509"/>
    <lineage>
        <taxon>Eukaryota</taxon>
        <taxon>Metazoa</taxon>
        <taxon>Chordata</taxon>
        <taxon>Craniata</taxon>
        <taxon>Vertebrata</taxon>
        <taxon>Euteleostomi</taxon>
        <taxon>Mammalia</taxon>
        <taxon>Eutheria</taxon>
        <taxon>Euarchontoglires</taxon>
        <taxon>Primates</taxon>
        <taxon>Haplorrhini</taxon>
        <taxon>Platyrrhini</taxon>
        <taxon>Atelidae</taxon>
        <taxon>Atelinae</taxon>
        <taxon>Ateles</taxon>
    </lineage>
</organism>
<name>HBG_ATEGE</name>
<proteinExistence type="evidence at transcript level"/>
<accession>P68068</accession>
<accession>P06891</accession>
<evidence type="ECO:0000255" key="1">
    <source>
        <dbReference type="PROSITE-ProRule" id="PRU00238"/>
    </source>
</evidence>
<dbReference type="EMBL" id="M36773">
    <property type="protein sequence ID" value="AAA36926.1"/>
    <property type="molecule type" value="Genomic_DNA"/>
</dbReference>
<dbReference type="EMBL" id="X53420">
    <property type="protein sequence ID" value="CAA37499.1"/>
    <property type="molecule type" value="Genomic_DNA"/>
</dbReference>
<dbReference type="EMBL" id="AF030092">
    <property type="protein sequence ID" value="AAB92226.1"/>
    <property type="molecule type" value="Genomic_DNA"/>
</dbReference>
<dbReference type="PIR" id="S21892">
    <property type="entry name" value="HGMKS"/>
</dbReference>
<dbReference type="SMR" id="P68068"/>
<dbReference type="GO" id="GO:0072562">
    <property type="term" value="C:blood microparticle"/>
    <property type="evidence" value="ECO:0007669"/>
    <property type="project" value="TreeGrafter"/>
</dbReference>
<dbReference type="GO" id="GO:0031838">
    <property type="term" value="C:haptoglobin-hemoglobin complex"/>
    <property type="evidence" value="ECO:0007669"/>
    <property type="project" value="TreeGrafter"/>
</dbReference>
<dbReference type="GO" id="GO:0005833">
    <property type="term" value="C:hemoglobin complex"/>
    <property type="evidence" value="ECO:0007669"/>
    <property type="project" value="InterPro"/>
</dbReference>
<dbReference type="GO" id="GO:0031720">
    <property type="term" value="F:haptoglobin binding"/>
    <property type="evidence" value="ECO:0007669"/>
    <property type="project" value="TreeGrafter"/>
</dbReference>
<dbReference type="GO" id="GO:0020037">
    <property type="term" value="F:heme binding"/>
    <property type="evidence" value="ECO:0007669"/>
    <property type="project" value="InterPro"/>
</dbReference>
<dbReference type="GO" id="GO:0031721">
    <property type="term" value="F:hemoglobin alpha binding"/>
    <property type="evidence" value="ECO:0007669"/>
    <property type="project" value="TreeGrafter"/>
</dbReference>
<dbReference type="GO" id="GO:0046872">
    <property type="term" value="F:metal ion binding"/>
    <property type="evidence" value="ECO:0007669"/>
    <property type="project" value="UniProtKB-KW"/>
</dbReference>
<dbReference type="GO" id="GO:0043177">
    <property type="term" value="F:organic acid binding"/>
    <property type="evidence" value="ECO:0007669"/>
    <property type="project" value="TreeGrafter"/>
</dbReference>
<dbReference type="GO" id="GO:0019825">
    <property type="term" value="F:oxygen binding"/>
    <property type="evidence" value="ECO:0007669"/>
    <property type="project" value="InterPro"/>
</dbReference>
<dbReference type="GO" id="GO:0005344">
    <property type="term" value="F:oxygen carrier activity"/>
    <property type="evidence" value="ECO:0007669"/>
    <property type="project" value="UniProtKB-KW"/>
</dbReference>
<dbReference type="GO" id="GO:0004601">
    <property type="term" value="F:peroxidase activity"/>
    <property type="evidence" value="ECO:0007669"/>
    <property type="project" value="TreeGrafter"/>
</dbReference>
<dbReference type="GO" id="GO:0042744">
    <property type="term" value="P:hydrogen peroxide catabolic process"/>
    <property type="evidence" value="ECO:0007669"/>
    <property type="project" value="TreeGrafter"/>
</dbReference>
<dbReference type="CDD" id="cd08925">
    <property type="entry name" value="Hb-beta-like"/>
    <property type="match status" value="1"/>
</dbReference>
<dbReference type="FunFam" id="1.10.490.10:FF:000001">
    <property type="entry name" value="Hemoglobin subunit beta"/>
    <property type="match status" value="1"/>
</dbReference>
<dbReference type="Gene3D" id="1.10.490.10">
    <property type="entry name" value="Globins"/>
    <property type="match status" value="1"/>
</dbReference>
<dbReference type="InterPro" id="IPR000971">
    <property type="entry name" value="Globin"/>
</dbReference>
<dbReference type="InterPro" id="IPR009050">
    <property type="entry name" value="Globin-like_sf"/>
</dbReference>
<dbReference type="InterPro" id="IPR012292">
    <property type="entry name" value="Globin/Proto"/>
</dbReference>
<dbReference type="InterPro" id="IPR002337">
    <property type="entry name" value="Hemoglobin_b"/>
</dbReference>
<dbReference type="InterPro" id="IPR050056">
    <property type="entry name" value="Hemoglobin_oxygen_transport"/>
</dbReference>
<dbReference type="PANTHER" id="PTHR11442">
    <property type="entry name" value="HEMOGLOBIN FAMILY MEMBER"/>
    <property type="match status" value="1"/>
</dbReference>
<dbReference type="PANTHER" id="PTHR11442:SF52">
    <property type="entry name" value="HEMOGLOBIN SUBUNIT GAMMA-1"/>
    <property type="match status" value="1"/>
</dbReference>
<dbReference type="Pfam" id="PF00042">
    <property type="entry name" value="Globin"/>
    <property type="match status" value="1"/>
</dbReference>
<dbReference type="PRINTS" id="PR00814">
    <property type="entry name" value="BETAHAEM"/>
</dbReference>
<dbReference type="SUPFAM" id="SSF46458">
    <property type="entry name" value="Globin-like"/>
    <property type="match status" value="1"/>
</dbReference>
<dbReference type="PROSITE" id="PS01033">
    <property type="entry name" value="GLOBIN"/>
    <property type="match status" value="1"/>
</dbReference>